<comment type="function">
    <text evidence="1">Component of the NuA4 histone acetyltransferase complex which is involved in transcriptional activation of selected genes principally by acetylation of nucleosomal histone H4 and H2A. The NuA4 complex is also involved in DNA repair (By similarity).</text>
</comment>
<comment type="subunit">
    <text evidence="1">Component of the NuA4 histone acetyltransferase complex.</text>
</comment>
<comment type="subcellular location">
    <subcellularLocation>
        <location evidence="5">Nucleus</location>
    </subcellularLocation>
</comment>
<comment type="similarity">
    <text evidence="5">Belongs to the EAF1 family.</text>
</comment>
<evidence type="ECO:0000250" key="1"/>
<evidence type="ECO:0000255" key="2">
    <source>
        <dbReference type="PROSITE-ProRule" id="PRU00133"/>
    </source>
</evidence>
<evidence type="ECO:0000255" key="3">
    <source>
        <dbReference type="PROSITE-ProRule" id="PRU00549"/>
    </source>
</evidence>
<evidence type="ECO:0000256" key="4">
    <source>
        <dbReference type="SAM" id="MobiDB-lite"/>
    </source>
</evidence>
<evidence type="ECO:0000305" key="5"/>
<feature type="chain" id="PRO_0000065821" description="Chromatin modification-related protein eaf-1">
    <location>
        <begin position="1"/>
        <end position="2189"/>
    </location>
</feature>
<feature type="domain" description="HSA" evidence="3">
    <location>
        <begin position="722"/>
        <end position="797"/>
    </location>
</feature>
<feature type="domain" description="Myb-like" evidence="2">
    <location>
        <begin position="985"/>
        <end position="1045"/>
    </location>
</feature>
<feature type="region of interest" description="Disordered" evidence="4">
    <location>
        <begin position="183"/>
        <end position="400"/>
    </location>
</feature>
<feature type="region of interest" description="Disordered" evidence="4">
    <location>
        <begin position="415"/>
        <end position="438"/>
    </location>
</feature>
<feature type="region of interest" description="Disordered" evidence="4">
    <location>
        <begin position="477"/>
        <end position="601"/>
    </location>
</feature>
<feature type="region of interest" description="Disordered" evidence="4">
    <location>
        <begin position="1320"/>
        <end position="1428"/>
    </location>
</feature>
<feature type="region of interest" description="Disordered" evidence="4">
    <location>
        <begin position="1622"/>
        <end position="1644"/>
    </location>
</feature>
<feature type="region of interest" description="Disordered" evidence="4">
    <location>
        <begin position="1663"/>
        <end position="1831"/>
    </location>
</feature>
<feature type="region of interest" description="Disordered" evidence="4">
    <location>
        <begin position="1846"/>
        <end position="2189"/>
    </location>
</feature>
<feature type="compositionally biased region" description="Low complexity" evidence="4">
    <location>
        <begin position="234"/>
        <end position="253"/>
    </location>
</feature>
<feature type="compositionally biased region" description="Basic and acidic residues" evidence="4">
    <location>
        <begin position="260"/>
        <end position="277"/>
    </location>
</feature>
<feature type="compositionally biased region" description="Polar residues" evidence="4">
    <location>
        <begin position="281"/>
        <end position="293"/>
    </location>
</feature>
<feature type="compositionally biased region" description="Polar residues" evidence="4">
    <location>
        <begin position="300"/>
        <end position="312"/>
    </location>
</feature>
<feature type="compositionally biased region" description="Polar residues" evidence="4">
    <location>
        <begin position="319"/>
        <end position="333"/>
    </location>
</feature>
<feature type="compositionally biased region" description="Basic and acidic residues" evidence="4">
    <location>
        <begin position="336"/>
        <end position="349"/>
    </location>
</feature>
<feature type="compositionally biased region" description="Low complexity" evidence="4">
    <location>
        <begin position="534"/>
        <end position="543"/>
    </location>
</feature>
<feature type="compositionally biased region" description="Polar residues" evidence="4">
    <location>
        <begin position="573"/>
        <end position="583"/>
    </location>
</feature>
<feature type="compositionally biased region" description="Low complexity" evidence="4">
    <location>
        <begin position="1320"/>
        <end position="1330"/>
    </location>
</feature>
<feature type="compositionally biased region" description="Low complexity" evidence="4">
    <location>
        <begin position="1336"/>
        <end position="1406"/>
    </location>
</feature>
<feature type="compositionally biased region" description="Low complexity" evidence="4">
    <location>
        <begin position="1663"/>
        <end position="1808"/>
    </location>
</feature>
<feature type="compositionally biased region" description="Low complexity" evidence="4">
    <location>
        <begin position="1818"/>
        <end position="1831"/>
    </location>
</feature>
<feature type="compositionally biased region" description="Low complexity" evidence="4">
    <location>
        <begin position="1846"/>
        <end position="1863"/>
    </location>
</feature>
<feature type="compositionally biased region" description="Low complexity" evidence="4">
    <location>
        <begin position="1873"/>
        <end position="2089"/>
    </location>
</feature>
<feature type="compositionally biased region" description="Low complexity" evidence="4">
    <location>
        <begin position="2097"/>
        <end position="2189"/>
    </location>
</feature>
<proteinExistence type="inferred from homology"/>
<organism>
    <name type="scientific">Neurospora crassa (strain ATCC 24698 / 74-OR23-1A / CBS 708.71 / DSM 1257 / FGSC 987)</name>
    <dbReference type="NCBI Taxonomy" id="367110"/>
    <lineage>
        <taxon>Eukaryota</taxon>
        <taxon>Fungi</taxon>
        <taxon>Dikarya</taxon>
        <taxon>Ascomycota</taxon>
        <taxon>Pezizomycotina</taxon>
        <taxon>Sordariomycetes</taxon>
        <taxon>Sordariomycetidae</taxon>
        <taxon>Sordariales</taxon>
        <taxon>Sordariaceae</taxon>
        <taxon>Neurospora</taxon>
    </lineage>
</organism>
<accession>Q7SBU6</accession>
<keyword id="KW-0010">Activator</keyword>
<keyword id="KW-0156">Chromatin regulator</keyword>
<keyword id="KW-0227">DNA damage</keyword>
<keyword id="KW-0234">DNA repair</keyword>
<keyword id="KW-0539">Nucleus</keyword>
<keyword id="KW-1185">Reference proteome</keyword>
<keyword id="KW-0804">Transcription</keyword>
<keyword id="KW-0805">Transcription regulation</keyword>
<name>EAF1_NEUCR</name>
<dbReference type="EMBL" id="CM002238">
    <property type="protein sequence ID" value="EAA33888.1"/>
    <property type="molecule type" value="Genomic_DNA"/>
</dbReference>
<dbReference type="RefSeq" id="XP_963124.1">
    <property type="nucleotide sequence ID" value="XM_958031.2"/>
</dbReference>
<dbReference type="SMR" id="Q7SBU6"/>
<dbReference type="STRING" id="367110.Q7SBU6"/>
<dbReference type="PaxDb" id="5141-EFNCRP00000007527"/>
<dbReference type="EnsemblFungi" id="EAA33888">
    <property type="protein sequence ID" value="EAA33888"/>
    <property type="gene ID" value="NCU07863"/>
</dbReference>
<dbReference type="GeneID" id="3879263"/>
<dbReference type="KEGG" id="ncr:NCU07863"/>
<dbReference type="VEuPathDB" id="FungiDB:NCU07863"/>
<dbReference type="HOGENOM" id="CLU_001331_0_0_1"/>
<dbReference type="InParanoid" id="Q7SBU6"/>
<dbReference type="OMA" id="KQQHASH"/>
<dbReference type="OrthoDB" id="5364245at2759"/>
<dbReference type="Proteomes" id="UP000001805">
    <property type="component" value="Chromosome 3, Linkage Group III"/>
</dbReference>
<dbReference type="GO" id="GO:0035267">
    <property type="term" value="C:NuA4 histone acetyltransferase complex"/>
    <property type="evidence" value="ECO:0000318"/>
    <property type="project" value="GO_Central"/>
</dbReference>
<dbReference type="GO" id="GO:0005634">
    <property type="term" value="C:nucleus"/>
    <property type="evidence" value="ECO:0007669"/>
    <property type="project" value="UniProtKB-SubCell"/>
</dbReference>
<dbReference type="GO" id="GO:0003682">
    <property type="term" value="F:chromatin binding"/>
    <property type="evidence" value="ECO:0000318"/>
    <property type="project" value="GO_Central"/>
</dbReference>
<dbReference type="GO" id="GO:0006325">
    <property type="term" value="P:chromatin organization"/>
    <property type="evidence" value="ECO:0007669"/>
    <property type="project" value="UniProtKB-KW"/>
</dbReference>
<dbReference type="GO" id="GO:0006281">
    <property type="term" value="P:DNA repair"/>
    <property type="evidence" value="ECO:0000318"/>
    <property type="project" value="GO_Central"/>
</dbReference>
<dbReference type="CDD" id="cd00167">
    <property type="entry name" value="SANT"/>
    <property type="match status" value="1"/>
</dbReference>
<dbReference type="Gene3D" id="1.10.10.60">
    <property type="entry name" value="Homeodomain-like"/>
    <property type="match status" value="1"/>
</dbReference>
<dbReference type="InterPro" id="IPR009057">
    <property type="entry name" value="Homeodomain-like_sf"/>
</dbReference>
<dbReference type="InterPro" id="IPR014012">
    <property type="entry name" value="HSA_dom"/>
</dbReference>
<dbReference type="InterPro" id="IPR001005">
    <property type="entry name" value="SANT/Myb"/>
</dbReference>
<dbReference type="PANTHER" id="PTHR46459:SF1">
    <property type="entry name" value="E1A-BINDING PROTEIN P400"/>
    <property type="match status" value="1"/>
</dbReference>
<dbReference type="PANTHER" id="PTHR46459">
    <property type="entry name" value="E1A-BINDING PROTEIN P400-RELATED"/>
    <property type="match status" value="1"/>
</dbReference>
<dbReference type="Pfam" id="PF13921">
    <property type="entry name" value="Myb_DNA-bind_6"/>
    <property type="match status" value="1"/>
</dbReference>
<dbReference type="SMART" id="SM00717">
    <property type="entry name" value="SANT"/>
    <property type="match status" value="1"/>
</dbReference>
<dbReference type="SUPFAM" id="SSF46689">
    <property type="entry name" value="Homeodomain-like"/>
    <property type="match status" value="1"/>
</dbReference>
<dbReference type="PROSITE" id="PS51204">
    <property type="entry name" value="HSA"/>
    <property type="match status" value="1"/>
</dbReference>
<dbReference type="PROSITE" id="PS50090">
    <property type="entry name" value="MYB_LIKE"/>
    <property type="match status" value="1"/>
</dbReference>
<gene>
    <name type="primary">eaf-1</name>
    <name type="synonym">vid-21</name>
    <name type="ORF">NCU07863</name>
</gene>
<sequence length="2189" mass="239181">MTEVGPADRRKLLHSKRAEANSIVTSRKRKLRELYAVATDEDGFPNHDLNDLDTRPASPGEAKFLFDCEILQGRRLAERLLPVFQRPRFDTLQHIATADESSLGHGPHVVQQVQPSPLIHPNHTIPKNVQHNGLPSPAPPASSIRHEPERTVPYNQVPNGAAGPQEALKAFAPRQEFQKLAPVQGSAVKTADGPSGESKPPAKETPVLLAPAAPHGNGRWNGIINNAPQGRVLPTPQTVAPPATAPTSTTKTANLGEGRAGPKDDTVSRGDAEEKARPKPTITSVNQLLSNGDSIRYPDTLSSPSSTVQSAPTPLGNEASASTSPDNEASQSFDKPVSRPEQELRRATTDNKGVGQFTGPSVAVPELRPQPQQPGVYANGAPEVPISSAPSVRPAASGAEAQLLQESAATRTSQVIGKAGVAGPHGAHSTGGLQTQHPSAVNGEVRNMMNGDIPGKHVASQASVSTGVAVTKAALPEVAKQGPLPQGPESRNNRADVGPTPMDLDRIPTAQAPKPIPSVHAVQEKAPSQESARQPQPSSTAPSTTPPSAQPAVSLEKTVPGIQINAPPETETETQARTSQSSHPDTESAVADEEGDMPPGLLTHRLKSLSTRLRERRRKSVPTVVFGKQYRKPRFSDDTALIVNKPKPPGHIPSEDYFVTLFIESFARTSSWMKPLEKLLHSAHKTVSTSDQTLSILDHQACKILRRVYHLQQHDKWSLRQPVRCLEPARPASHQDLLIKEMKWMRTDFREERKWKRAVARNLAYACAEWYYSSPADRKLLQVDAKIPPVRAVDNADTSMADAPETGESLVPELDHSDSPVGNDEEVPELPITTIAPATIFALQDDEVVFELQPSRTADLLLENLPMYGSPLKVPKFDWIIPDYDPDAKWKRPAVPLSKYVEGEMVLDVKPQPQKRSRFQFQGEDEEEEEEYVFGAQPDKGAKLPPTSTDVALFAPEMKLTRDRLHAGHQFRPPSEHPMPVQSFFESRIASQWTLAEDDQLRALVREYSYNWSLISSMISSRSSFPSAVERRTPWECFERWVNLEGLPSDFAKTPYFKAYQARIDAAGRTILQHNQNAAQGQQVGPNGAVAPIPRKRPTNTMRVERRRNQKHLALFDAMRKLAKKREAAAQKQQAQATMTAMRKTNEQQRQQPQQQLHLQAKTPQEYSLMRAARDQQIAEKMAHLAARQHEIIQKRLLTQRQAQLAATPGVAQVPQTAAQLAAANSLNNAAARLNIPGQMAVTAQKLAPGRVPMQAPAGIPTVPAQLAASGLVPPLPVAAIPQAQLQAMQAQHRLPMVNPTPDINLVMQARRIQDQQRAVAVQLQQQQHQQHQHQQHPQQPQQQGQVQQQVVSQQQQQQHQPQQQQQPQQQQQLQQQQPQQQQPQHQQVQTPQPAQQQPQQPQVTQQPPPVPQVQINGVQGSPTPMRPVVNSLNNGVYMSSVSAQAMMASFNAANSVAGMVTSPGAGLSMPMLPAGSPRGPQIPAQQLPYTHIHTRLKEFETHFRNKNPGATQDQIRQMATEHLGRLIVQTQQHAMNAAAGGVGHSLGTVATTTSPHQYAQLLRAQQQAQAQQAQAQQQAPQPAQSQLTPAQLAQAQAAAAQKQKQAAAAAAQAKVLAQAQMQTQTPAHQPHQPQAQPHVQAQAMAAAQLQAQVQLQAQAAAQKQAAQAHPQAQSQGQGQPPQQTQRAHQVQQVQGQQAHQLPQGSQSQQIQQQVQQSPQARQQSQQPQMVRQPVQQAQQPQQLQQPQQSQKTPQMQPQQQVQTPHQQAQKAQQSQQAQLAQQQQHQQQQQQQQHGQAQSQGQIQGQGQAPGQGQAPGQGHAQGQVQGQVQGQVQGQVQGQVQGQVQGQVQGQAPGQVQPQHAQHSRHTPNSQHAQHTQQAQHARNAQQAHHTQQVQQAQHVQQPQGLQGQRHGQVHGNGQQLHQQHQHQQQQPQQAQQTQQQRQQVHPAPQLPQAQPPQHSHQAQAQHPQTQQAQAPQAQAQQPQPPQQAQAQQVQQPQQAKLTQQAQQAQQAQGQQAQGQQAQGQQAQSQQARAQQAQVQQAQVQQAQVQQAQAQQAQAQQAQAQQAQAQAQAQSHGQMQPQTQPQQQPQPQPQSQPQAHQPQQASQQVQHGLVGQQGQQNRQGQQGQQSHQVQQAQQPQVQQAQQPVATPQSASQTSQNSQPAQQAGMAQQQQGQGSGSAAPAPTK</sequence>
<reference key="1">
    <citation type="journal article" date="2003" name="Nature">
        <title>The genome sequence of the filamentous fungus Neurospora crassa.</title>
        <authorList>
            <person name="Galagan J.E."/>
            <person name="Calvo S.E."/>
            <person name="Borkovich K.A."/>
            <person name="Selker E.U."/>
            <person name="Read N.D."/>
            <person name="Jaffe D.B."/>
            <person name="FitzHugh W."/>
            <person name="Ma L.-J."/>
            <person name="Smirnov S."/>
            <person name="Purcell S."/>
            <person name="Rehman B."/>
            <person name="Elkins T."/>
            <person name="Engels R."/>
            <person name="Wang S."/>
            <person name="Nielsen C.B."/>
            <person name="Butler J."/>
            <person name="Endrizzi M."/>
            <person name="Qui D."/>
            <person name="Ianakiev P."/>
            <person name="Bell-Pedersen D."/>
            <person name="Nelson M.A."/>
            <person name="Werner-Washburne M."/>
            <person name="Selitrennikoff C.P."/>
            <person name="Kinsey J.A."/>
            <person name="Braun E.L."/>
            <person name="Zelter A."/>
            <person name="Schulte U."/>
            <person name="Kothe G.O."/>
            <person name="Jedd G."/>
            <person name="Mewes H.-W."/>
            <person name="Staben C."/>
            <person name="Marcotte E."/>
            <person name="Greenberg D."/>
            <person name="Roy A."/>
            <person name="Foley K."/>
            <person name="Naylor J."/>
            <person name="Stange-Thomann N."/>
            <person name="Barrett R."/>
            <person name="Gnerre S."/>
            <person name="Kamal M."/>
            <person name="Kamvysselis M."/>
            <person name="Mauceli E.W."/>
            <person name="Bielke C."/>
            <person name="Rudd S."/>
            <person name="Frishman D."/>
            <person name="Krystofova S."/>
            <person name="Rasmussen C."/>
            <person name="Metzenberg R.L."/>
            <person name="Perkins D.D."/>
            <person name="Kroken S."/>
            <person name="Cogoni C."/>
            <person name="Macino G."/>
            <person name="Catcheside D.E.A."/>
            <person name="Li W."/>
            <person name="Pratt R.J."/>
            <person name="Osmani S.A."/>
            <person name="DeSouza C.P.C."/>
            <person name="Glass N.L."/>
            <person name="Orbach M.J."/>
            <person name="Berglund J.A."/>
            <person name="Voelker R."/>
            <person name="Yarden O."/>
            <person name="Plamann M."/>
            <person name="Seiler S."/>
            <person name="Dunlap J.C."/>
            <person name="Radford A."/>
            <person name="Aramayo R."/>
            <person name="Natvig D.O."/>
            <person name="Alex L.A."/>
            <person name="Mannhaupt G."/>
            <person name="Ebbole D.J."/>
            <person name="Freitag M."/>
            <person name="Paulsen I."/>
            <person name="Sachs M.S."/>
            <person name="Lander E.S."/>
            <person name="Nusbaum C."/>
            <person name="Birren B.W."/>
        </authorList>
    </citation>
    <scope>NUCLEOTIDE SEQUENCE [LARGE SCALE GENOMIC DNA]</scope>
    <source>
        <strain>ATCC 24698 / 74-OR23-1A / CBS 708.71 / DSM 1257 / FGSC 987</strain>
    </source>
</reference>
<protein>
    <recommendedName>
        <fullName>Chromatin modification-related protein eaf-1</fullName>
    </recommendedName>
    <alternativeName>
        <fullName>Esa-1-associated factor 1</fullName>
    </alternativeName>
    <alternativeName>
        <fullName>Vacuolar import and degradation protein 21</fullName>
    </alternativeName>
</protein>